<feature type="chain" id="PRO_0000099115" description="Cap-specific mRNA (nucleoside-2'-O-)-methyltransferase">
    <location>
        <begin position="1"/>
        <end position="308"/>
    </location>
</feature>
<feature type="region of interest" description="Binding to NPH-I" evidence="2">
    <location>
        <begin position="177"/>
        <end position="257"/>
    </location>
</feature>
<feature type="active site" description="For methyltransferase activity" evidence="2">
    <location>
        <position position="183"/>
    </location>
</feature>
<feature type="binding site" evidence="2">
    <location>
        <position position="30"/>
    </location>
    <ligand>
        <name>mRNA</name>
        <dbReference type="ChEBI" id="CHEBI:33699"/>
    </ligand>
    <ligandPart>
        <name>mRNA cap</name>
    </ligandPart>
</feature>
<feature type="binding site" evidence="2">
    <location>
        <position position="46"/>
    </location>
    <ligand>
        <name>S-adenosyl-L-methionine</name>
        <dbReference type="ChEBI" id="CHEBI:59789"/>
    </ligand>
</feature>
<feature type="binding site" evidence="2">
    <location>
        <position position="74"/>
    </location>
    <ligand>
        <name>S-adenosyl-L-methionine</name>
        <dbReference type="ChEBI" id="CHEBI:59789"/>
    </ligand>
</feature>
<feature type="binding site" evidence="2">
    <location>
        <position position="76"/>
    </location>
    <ligand>
        <name>S-adenosyl-L-methionine</name>
        <dbReference type="ChEBI" id="CHEBI:59789"/>
    </ligand>
</feature>
<feature type="binding site" evidence="2">
    <location>
        <position position="80"/>
    </location>
    <ligand>
        <name>S-adenosyl-L-methionine</name>
        <dbReference type="ChEBI" id="CHEBI:59789"/>
    </ligand>
</feature>
<feature type="binding site" evidence="2">
    <location>
        <position position="103"/>
    </location>
    <ligand>
        <name>S-adenosyl-L-methionine</name>
        <dbReference type="ChEBI" id="CHEBI:59789"/>
    </ligand>
</feature>
<feature type="binding site" evidence="2">
    <location>
        <position position="105"/>
    </location>
    <ligand>
        <name>S-adenosyl-L-methionine</name>
        <dbReference type="ChEBI" id="CHEBI:59789"/>
    </ligand>
</feature>
<feature type="binding site" evidence="2">
    <location>
        <position position="124"/>
    </location>
    <ligand>
        <name>S-adenosyl-L-methionine</name>
        <dbReference type="ChEBI" id="CHEBI:59789"/>
    </ligand>
</feature>
<feature type="binding site" evidence="2">
    <location>
        <position position="147"/>
    </location>
    <ligand>
        <name>S-adenosyl-L-methionine</name>
        <dbReference type="ChEBI" id="CHEBI:59789"/>
    </ligand>
</feature>
<feature type="binding site" evidence="2">
    <location>
        <begin position="185"/>
        <end position="188"/>
    </location>
    <ligand>
        <name>mRNA</name>
        <dbReference type="ChEBI" id="CHEBI:33699"/>
    </ligand>
    <ligandPart>
        <name>mRNA cap</name>
    </ligandPart>
</feature>
<feature type="binding site" evidence="2">
    <location>
        <position position="190"/>
    </location>
    <ligand>
        <name>mRNA</name>
        <dbReference type="ChEBI" id="CHEBI:33699"/>
    </ligand>
    <ligandPart>
        <name>mRNA cap</name>
    </ligandPart>
</feature>
<feature type="binding site" evidence="2">
    <location>
        <begin position="213"/>
        <end position="215"/>
    </location>
    <ligand>
        <name>mRNA</name>
        <dbReference type="ChEBI" id="CHEBI:33699"/>
    </ligand>
    <ligandPart>
        <name>mRNA cap</name>
    </ligandPart>
</feature>
<feature type="binding site" evidence="2">
    <location>
        <position position="241"/>
    </location>
    <ligand>
        <name>mRNA</name>
        <dbReference type="ChEBI" id="CHEBI:33699"/>
    </ligand>
    <ligandPart>
        <name>mRNA cap</name>
    </ligandPart>
</feature>
<feature type="sequence conflict" description="In Ref. 1; AAA66422." evidence="3" ref="1">
    <original>M</original>
    <variation>R</variation>
    <location>
        <position position="244"/>
    </location>
</feature>
<gene>
    <name type="primary">OPG102</name>
    <name type="synonym">PAPS</name>
    <name type="ordered locus">FPV134</name>
    <name type="ORF">FP9</name>
</gene>
<organism>
    <name type="scientific">Fowlpox virus (strain NVSL)</name>
    <name type="common">FPV</name>
    <dbReference type="NCBI Taxonomy" id="928301"/>
    <lineage>
        <taxon>Viruses</taxon>
        <taxon>Varidnaviria</taxon>
        <taxon>Bamfordvirae</taxon>
        <taxon>Nucleocytoviricota</taxon>
        <taxon>Pokkesviricetes</taxon>
        <taxon>Chitovirales</taxon>
        <taxon>Poxviridae</taxon>
        <taxon>Chordopoxvirinae</taxon>
        <taxon>Avipoxvirus</taxon>
        <taxon>Fowlpox virus</taxon>
    </lineage>
</organism>
<keyword id="KW-0251">Elongation factor</keyword>
<keyword id="KW-0489">Methyltransferase</keyword>
<keyword id="KW-0506">mRNA capping</keyword>
<keyword id="KW-0507">mRNA processing</keyword>
<keyword id="KW-0648">Protein biosynthesis</keyword>
<keyword id="KW-1185">Reference proteome</keyword>
<keyword id="KW-0949">S-adenosyl-L-methionine</keyword>
<keyword id="KW-0804">Transcription</keyword>
<keyword id="KW-0808">Transferase</keyword>
<keyword id="KW-0946">Virion</keyword>
<name>MCE_FOWPN</name>
<accession>P15916</accession>
<accession>Q85279</accession>
<accession>Q9J594</accession>
<protein>
    <recommendedName>
        <fullName>Cap-specific mRNA (nucleoside-2'-O-)-methyltransferase</fullName>
        <ecNumber>2.1.1.57</ecNumber>
    </recommendedName>
    <alternativeName>
        <fullName>Poly(A) polymerase regulatory subunit</fullName>
    </alternativeName>
    <alternativeName>
        <fullName>Poly(A) polymerase small subunit</fullName>
        <shortName>PAP-S</shortName>
    </alternativeName>
    <alternativeName>
        <fullName>VP39</fullName>
    </alternativeName>
</protein>
<comment type="function">
    <text evidence="1">Displays methyltransferase, positive regulation of the poly(A) polymerase and transcription elongation activities. Involved in the modification of both mRNA ends and in intermediate and late gene positive transcription elongation. At the mRNAs 5' end, methylates the ribose 2' OH group of the first transcribed nucleotide, thereby producing a 2'-O-methylpurine cap. At the 3' end, functions as a processivity factor which stimulates the activity of the viral poly(A) polymerase OPG063 that creates mRNA's poly(A) tail. In the presence of OPG102, OPG063 does not dissociate from the RNA allowing tail elongation to around 250 adenylates.</text>
</comment>
<comment type="catalytic activity">
    <reaction evidence="1">
        <text>a 5'-end (N(7)-methyl 5'-triphosphoguanosine)-ribonucleoside in mRNA + S-adenosyl-L-methionine = a 5'-end (N(7)-methyl 5'-triphosphoguanosine)-(2'-O-methyl-ribonucleoside) in mRNA + S-adenosyl-L-homocysteine + H(+)</text>
        <dbReference type="Rhea" id="RHEA:67020"/>
        <dbReference type="Rhea" id="RHEA-COMP:17167"/>
        <dbReference type="Rhea" id="RHEA-COMP:17168"/>
        <dbReference type="ChEBI" id="CHEBI:15378"/>
        <dbReference type="ChEBI" id="CHEBI:57856"/>
        <dbReference type="ChEBI" id="CHEBI:59789"/>
        <dbReference type="ChEBI" id="CHEBI:156461"/>
        <dbReference type="ChEBI" id="CHEBI:167609"/>
        <dbReference type="EC" id="2.1.1.57"/>
    </reaction>
</comment>
<comment type="subunit">
    <text evidence="1">Interacts with poly(A) polymerase catalytic subunit OPG063. Interacts with OPG109 and OPG123; these interactions might help linking transcription to capping and polyadenylation.</text>
</comment>
<comment type="subcellular location">
    <subcellularLocation>
        <location evidence="1">Virion</location>
    </subcellularLocation>
    <text evidence="1">Localizes to the virion core.</text>
</comment>
<comment type="similarity">
    <text evidence="2">Belongs to the class I-like SAM-binding methyltransferase superfamily. Poxvirus/kinetoplastid 2'-O-MTase family.</text>
</comment>
<reference key="1">
    <citation type="journal article" date="1987" name="Virology">
        <title>Similar genetic organization between a region of fowlpox virus DNA and the vaccinia virus HindIII J fragment despite divergent location of the thymidine kinase gene.</title>
        <authorList>
            <person name="Drillien R."/>
            <person name="Spehner D."/>
            <person name="Villeval D."/>
            <person name="Lecocq J.-P."/>
        </authorList>
    </citation>
    <scope>NUCLEOTIDE SEQUENCE [GENOMIC DNA]</scope>
    <source>
        <strain>Salisbury</strain>
    </source>
</reference>
<reference key="2">
    <citation type="journal article" date="2000" name="J. Virol.">
        <title>The genome of fowlpox virus.</title>
        <authorList>
            <person name="Afonso C.L."/>
            <person name="Tulman E.R."/>
            <person name="Lu Z."/>
            <person name="Zsak L."/>
            <person name="Kutish G.F."/>
            <person name="Rock D.L."/>
        </authorList>
    </citation>
    <scope>NUCLEOTIDE SEQUENCE [LARGE SCALE GENOMIC DNA]</scope>
</reference>
<reference key="3">
    <citation type="journal article" date="1988" name="J. Gen. Virol.">
        <title>Comparison of a conserved region in fowlpox virus and vaccinia virus genomes and the translocation of the fowlpox virus thymidine kinase gene.</title>
        <authorList>
            <person name="Binns M.M."/>
            <person name="Tomley F.M."/>
            <person name="Campbell J."/>
            <person name="Boursnell M.E.G."/>
        </authorList>
    </citation>
    <scope>NUCLEOTIDE SEQUENCE [GENOMIC DNA] OF 1-206</scope>
    <source>
        <strain>FP-9 / Isolate HP-444</strain>
    </source>
</reference>
<proteinExistence type="inferred from homology"/>
<dbReference type="EC" id="2.1.1.57"/>
<dbReference type="EMBL" id="M17418">
    <property type="protein sequence ID" value="AAA66422.1"/>
    <property type="molecule type" value="Genomic_DNA"/>
</dbReference>
<dbReference type="EMBL" id="AF198100">
    <property type="protein sequence ID" value="AAF44478.1"/>
    <property type="molecule type" value="Genomic_DNA"/>
</dbReference>
<dbReference type="EMBL" id="D00320">
    <property type="protein sequence ID" value="BAA00231.1"/>
    <property type="molecule type" value="Genomic_DNA"/>
</dbReference>
<dbReference type="PIR" id="PS0044">
    <property type="entry name" value="WMVZP9"/>
</dbReference>
<dbReference type="RefSeq" id="NP_039097.1">
    <property type="nucleotide sequence ID" value="NC_002188.1"/>
</dbReference>
<dbReference type="SMR" id="P15916"/>
<dbReference type="GeneID" id="1486682"/>
<dbReference type="KEGG" id="vg:1486682"/>
<dbReference type="Proteomes" id="UP000008597">
    <property type="component" value="Segment"/>
</dbReference>
<dbReference type="GO" id="GO:0044423">
    <property type="term" value="C:virion component"/>
    <property type="evidence" value="ECO:0007669"/>
    <property type="project" value="UniProtKB-KW"/>
</dbReference>
<dbReference type="GO" id="GO:0004483">
    <property type="term" value="F:mRNA (nucleoside-2'-O-)-methyltransferase activity"/>
    <property type="evidence" value="ECO:0007669"/>
    <property type="project" value="UniProtKB-EC"/>
</dbReference>
<dbReference type="GO" id="GO:0006370">
    <property type="term" value="P:7-methylguanosine mRNA capping"/>
    <property type="evidence" value="ECO:0007669"/>
    <property type="project" value="UniProtKB-KW"/>
</dbReference>
<dbReference type="GO" id="GO:0032259">
    <property type="term" value="P:methylation"/>
    <property type="evidence" value="ECO:0007669"/>
    <property type="project" value="UniProtKB-KW"/>
</dbReference>
<dbReference type="GO" id="GO:0031440">
    <property type="term" value="P:regulation of mRNA 3'-end processing"/>
    <property type="evidence" value="ECO:0007669"/>
    <property type="project" value="InterPro"/>
</dbReference>
<dbReference type="CDD" id="cd20756">
    <property type="entry name" value="capping_2-OMTase_Poxviridae"/>
    <property type="match status" value="1"/>
</dbReference>
<dbReference type="Gene3D" id="3.40.50.150">
    <property type="entry name" value="Vaccinia Virus protein VP39"/>
    <property type="match status" value="1"/>
</dbReference>
<dbReference type="InterPro" id="IPR000176">
    <property type="entry name" value="mRNA_MeTrfase-like"/>
</dbReference>
<dbReference type="InterPro" id="IPR025804">
    <property type="entry name" value="Pox/kineto_cap_MeTfrase"/>
</dbReference>
<dbReference type="InterPro" id="IPR030375">
    <property type="entry name" value="Poxvir_cap_MeTfrase"/>
</dbReference>
<dbReference type="InterPro" id="IPR029063">
    <property type="entry name" value="SAM-dependent_MTases_sf"/>
</dbReference>
<dbReference type="Pfam" id="PF01358">
    <property type="entry name" value="PARP_regulatory"/>
    <property type="match status" value="1"/>
</dbReference>
<dbReference type="PIRSF" id="PIRSF003726">
    <property type="entry name" value="PolA_polym_reg_poxV"/>
    <property type="match status" value="1"/>
</dbReference>
<dbReference type="SUPFAM" id="SSF53335">
    <property type="entry name" value="S-adenosyl-L-methionine-dependent methyltransferases"/>
    <property type="match status" value="1"/>
</dbReference>
<dbReference type="PROSITE" id="PS51612">
    <property type="entry name" value="SAM_MT_2O_PK"/>
    <property type="match status" value="1"/>
</dbReference>
<organismHost>
    <name type="scientific">Vertebrata</name>
    <dbReference type="NCBI Taxonomy" id="7742"/>
</organismHost>
<sequence length="308" mass="36655">MHEGHQESFKELEMTKPYMFFNELVGEEDYNKELENSNTKFQGQGQLKLLLGELYFLNTLIKNKTLCSDTVIVYIGSAPGSHINFLYHYMDDLKIDLKWILIDGRDHDRSLESLKNVSIIHRFVDEQYLFKLRNMIRKNHKIVLISDIRSLRGKEPTSEDLLHDYALQNQMVSILKPIASSLKWRCPFPDQWIRDFYIPCGDEFLQPFAPPFSAEMRLLSCYSRAPIRLIRIDKNAAIEYEKKMFYLNTKIRPKIVLDFDYPNQKYDYFYMFYILKDIVLPTYKEFSTYKQKVIFLQEAIFNALNIKP</sequence>
<evidence type="ECO:0000250" key="1">
    <source>
        <dbReference type="UniProtKB" id="P07617"/>
    </source>
</evidence>
<evidence type="ECO:0000255" key="2">
    <source>
        <dbReference type="PROSITE-ProRule" id="PRU00944"/>
    </source>
</evidence>
<evidence type="ECO:0000305" key="3"/>